<protein>
    <recommendedName>
        <fullName evidence="1">Fatty acid metabolism regulator protein</fullName>
    </recommendedName>
</protein>
<evidence type="ECO:0000255" key="1">
    <source>
        <dbReference type="HAMAP-Rule" id="MF_00696"/>
    </source>
</evidence>
<keyword id="KW-0010">Activator</keyword>
<keyword id="KW-0963">Cytoplasm</keyword>
<keyword id="KW-0238">DNA-binding</keyword>
<keyword id="KW-0276">Fatty acid metabolism</keyword>
<keyword id="KW-0443">Lipid metabolism</keyword>
<keyword id="KW-1185">Reference proteome</keyword>
<keyword id="KW-0678">Repressor</keyword>
<keyword id="KW-0804">Transcription</keyword>
<keyword id="KW-0805">Transcription regulation</keyword>
<name>FADR_SHEPA</name>
<accession>A8H5C1</accession>
<comment type="function">
    <text evidence="1">Multifunctional regulator of fatty acid metabolism.</text>
</comment>
<comment type="subunit">
    <text evidence="1">Homodimer.</text>
</comment>
<comment type="subcellular location">
    <subcellularLocation>
        <location evidence="1">Cytoplasm</location>
    </subcellularLocation>
</comment>
<dbReference type="EMBL" id="CP000851">
    <property type="protein sequence ID" value="ABV87758.1"/>
    <property type="molecule type" value="Genomic_DNA"/>
</dbReference>
<dbReference type="RefSeq" id="WP_012155670.1">
    <property type="nucleotide sequence ID" value="NC_009901.1"/>
</dbReference>
<dbReference type="SMR" id="A8H5C1"/>
<dbReference type="STRING" id="398579.Spea_2438"/>
<dbReference type="KEGG" id="spl:Spea_2438"/>
<dbReference type="eggNOG" id="COG2186">
    <property type="taxonomic scope" value="Bacteria"/>
</dbReference>
<dbReference type="HOGENOM" id="CLU_017584_9_4_6"/>
<dbReference type="OrthoDB" id="5683977at2"/>
<dbReference type="Proteomes" id="UP000002608">
    <property type="component" value="Chromosome"/>
</dbReference>
<dbReference type="GO" id="GO:0005737">
    <property type="term" value="C:cytoplasm"/>
    <property type="evidence" value="ECO:0007669"/>
    <property type="project" value="UniProtKB-SubCell"/>
</dbReference>
<dbReference type="GO" id="GO:0003677">
    <property type="term" value="F:DNA binding"/>
    <property type="evidence" value="ECO:0007669"/>
    <property type="project" value="UniProtKB-KW"/>
</dbReference>
<dbReference type="GO" id="GO:0003700">
    <property type="term" value="F:DNA-binding transcription factor activity"/>
    <property type="evidence" value="ECO:0007669"/>
    <property type="project" value="UniProtKB-UniRule"/>
</dbReference>
<dbReference type="GO" id="GO:0000062">
    <property type="term" value="F:fatty-acyl-CoA binding"/>
    <property type="evidence" value="ECO:0007669"/>
    <property type="project" value="InterPro"/>
</dbReference>
<dbReference type="GO" id="GO:0006631">
    <property type="term" value="P:fatty acid metabolic process"/>
    <property type="evidence" value="ECO:0007669"/>
    <property type="project" value="UniProtKB-KW"/>
</dbReference>
<dbReference type="GO" id="GO:0019217">
    <property type="term" value="P:regulation of fatty acid metabolic process"/>
    <property type="evidence" value="ECO:0007669"/>
    <property type="project" value="UniProtKB-UniRule"/>
</dbReference>
<dbReference type="CDD" id="cd07377">
    <property type="entry name" value="WHTH_GntR"/>
    <property type="match status" value="1"/>
</dbReference>
<dbReference type="Gene3D" id="1.20.120.530">
    <property type="entry name" value="GntR ligand-binding domain-like"/>
    <property type="match status" value="1"/>
</dbReference>
<dbReference type="Gene3D" id="1.10.10.10">
    <property type="entry name" value="Winged helix-like DNA-binding domain superfamily/Winged helix DNA-binding domain"/>
    <property type="match status" value="1"/>
</dbReference>
<dbReference type="HAMAP" id="MF_00696">
    <property type="entry name" value="HTH_FadR"/>
    <property type="match status" value="1"/>
</dbReference>
<dbReference type="InterPro" id="IPR014178">
    <property type="entry name" value="FA-response_TF_FadR"/>
</dbReference>
<dbReference type="InterPro" id="IPR028374">
    <property type="entry name" value="FadR_C"/>
</dbReference>
<dbReference type="InterPro" id="IPR008920">
    <property type="entry name" value="TF_FadR/GntR_C"/>
</dbReference>
<dbReference type="InterPro" id="IPR000524">
    <property type="entry name" value="Tscrpt_reg_HTH_GntR"/>
</dbReference>
<dbReference type="InterPro" id="IPR036388">
    <property type="entry name" value="WH-like_DNA-bd_sf"/>
</dbReference>
<dbReference type="InterPro" id="IPR036390">
    <property type="entry name" value="WH_DNA-bd_sf"/>
</dbReference>
<dbReference type="NCBIfam" id="TIGR02812">
    <property type="entry name" value="fadR_gamma"/>
    <property type="match status" value="1"/>
</dbReference>
<dbReference type="NCBIfam" id="NF003444">
    <property type="entry name" value="PRK04984.1"/>
    <property type="match status" value="1"/>
</dbReference>
<dbReference type="PANTHER" id="PTHR43537:SF52">
    <property type="entry name" value="FATTY ACID METABOLISM REGULATOR PROTEIN"/>
    <property type="match status" value="1"/>
</dbReference>
<dbReference type="PANTHER" id="PTHR43537">
    <property type="entry name" value="TRANSCRIPTIONAL REGULATOR, GNTR FAMILY"/>
    <property type="match status" value="1"/>
</dbReference>
<dbReference type="Pfam" id="PF07840">
    <property type="entry name" value="FadR_C"/>
    <property type="match status" value="1"/>
</dbReference>
<dbReference type="Pfam" id="PF00392">
    <property type="entry name" value="GntR"/>
    <property type="match status" value="1"/>
</dbReference>
<dbReference type="PRINTS" id="PR00035">
    <property type="entry name" value="HTHGNTR"/>
</dbReference>
<dbReference type="SMART" id="SM00345">
    <property type="entry name" value="HTH_GNTR"/>
    <property type="match status" value="1"/>
</dbReference>
<dbReference type="SUPFAM" id="SSF48008">
    <property type="entry name" value="GntR ligand-binding domain-like"/>
    <property type="match status" value="1"/>
</dbReference>
<dbReference type="SUPFAM" id="SSF46785">
    <property type="entry name" value="Winged helix' DNA-binding domain"/>
    <property type="match status" value="1"/>
</dbReference>
<dbReference type="PROSITE" id="PS50949">
    <property type="entry name" value="HTH_GNTR"/>
    <property type="match status" value="1"/>
</dbReference>
<feature type="chain" id="PRO_1000083189" description="Fatty acid metabolism regulator protein">
    <location>
        <begin position="1"/>
        <end position="239"/>
    </location>
</feature>
<feature type="domain" description="HTH gntR-type" evidence="1">
    <location>
        <begin position="6"/>
        <end position="74"/>
    </location>
</feature>
<feature type="DNA-binding region" description="H-T-H motif" evidence="1">
    <location>
        <begin position="34"/>
        <end position="53"/>
    </location>
</feature>
<gene>
    <name evidence="1" type="primary">fadR</name>
    <name type="ordered locus">Spea_2438</name>
</gene>
<organism>
    <name type="scientific">Shewanella pealeana (strain ATCC 700345 / ANG-SQ1)</name>
    <dbReference type="NCBI Taxonomy" id="398579"/>
    <lineage>
        <taxon>Bacteria</taxon>
        <taxon>Pseudomonadati</taxon>
        <taxon>Pseudomonadota</taxon>
        <taxon>Gammaproteobacteria</taxon>
        <taxon>Alteromonadales</taxon>
        <taxon>Shewanellaceae</taxon>
        <taxon>Shewanella</taxon>
    </lineage>
</organism>
<proteinExistence type="inferred from homology"/>
<reference key="1">
    <citation type="submission" date="2007-10" db="EMBL/GenBank/DDBJ databases">
        <title>Complete sequence of Shewanella pealeana ATCC 700345.</title>
        <authorList>
            <consortium name="US DOE Joint Genome Institute"/>
            <person name="Copeland A."/>
            <person name="Lucas S."/>
            <person name="Lapidus A."/>
            <person name="Barry K."/>
            <person name="Glavina del Rio T."/>
            <person name="Dalin E."/>
            <person name="Tice H."/>
            <person name="Pitluck S."/>
            <person name="Chertkov O."/>
            <person name="Brettin T."/>
            <person name="Bruce D."/>
            <person name="Detter J.C."/>
            <person name="Han C."/>
            <person name="Schmutz J."/>
            <person name="Larimer F."/>
            <person name="Land M."/>
            <person name="Hauser L."/>
            <person name="Kyrpides N."/>
            <person name="Kim E."/>
            <person name="Zhao J.-S.Z."/>
            <person name="Manno D."/>
            <person name="Hawari J."/>
            <person name="Richardson P."/>
        </authorList>
    </citation>
    <scope>NUCLEOTIDE SEQUENCE [LARGE SCALE GENOMIC DNA]</scope>
    <source>
        <strain>ATCC 700345 / ANG-SQ1</strain>
    </source>
</reference>
<sequence length="239" mass="26982">MIINAKGPASFAEKYIVRSIWEDKFPPGSILPAERELSELIGVTRTTLREVLQRLARDGWLTIQHGKPTRVNNFWETSGLNILETIAELNPDGFPELVDQLLSARSSVSAIYFRGAIRNNPEEAIEALSHLSELEDTAQAYAEFDYQLQHTLAFSSGNPLYVLILNGFKGLYSRVGRYYFSSAEARALAMDFYKQLQQLAIDKNYTDVPALMRTYGINSGVMWQSLRDDMPVDLGYSDN</sequence>